<dbReference type="EC" id="2.3.1.46" evidence="1"/>
<dbReference type="EMBL" id="CP000961">
    <property type="protein sequence ID" value="ACA87474.1"/>
    <property type="molecule type" value="Genomic_DNA"/>
</dbReference>
<dbReference type="RefSeq" id="WP_012325810.1">
    <property type="nucleotide sequence ID" value="NC_010506.1"/>
</dbReference>
<dbReference type="SMR" id="B1KMU6"/>
<dbReference type="STRING" id="392500.Swoo_3204"/>
<dbReference type="KEGG" id="swd:Swoo_3204"/>
<dbReference type="eggNOG" id="COG1897">
    <property type="taxonomic scope" value="Bacteria"/>
</dbReference>
<dbReference type="HOGENOM" id="CLU_057851_0_1_6"/>
<dbReference type="UniPathway" id="UPA00051">
    <property type="reaction ID" value="UER00075"/>
</dbReference>
<dbReference type="Proteomes" id="UP000002168">
    <property type="component" value="Chromosome"/>
</dbReference>
<dbReference type="GO" id="GO:0005737">
    <property type="term" value="C:cytoplasm"/>
    <property type="evidence" value="ECO:0007669"/>
    <property type="project" value="UniProtKB-SubCell"/>
</dbReference>
<dbReference type="GO" id="GO:0004414">
    <property type="term" value="F:homoserine O-acetyltransferase activity"/>
    <property type="evidence" value="ECO:0007669"/>
    <property type="project" value="UniProtKB-UniRule"/>
</dbReference>
<dbReference type="GO" id="GO:0008899">
    <property type="term" value="F:homoserine O-succinyltransferase activity"/>
    <property type="evidence" value="ECO:0007669"/>
    <property type="project" value="UniProtKB-EC"/>
</dbReference>
<dbReference type="GO" id="GO:0019281">
    <property type="term" value="P:L-methionine biosynthetic process from homoserine via O-succinyl-L-homoserine and cystathionine"/>
    <property type="evidence" value="ECO:0007669"/>
    <property type="project" value="InterPro"/>
</dbReference>
<dbReference type="CDD" id="cd03131">
    <property type="entry name" value="GATase1_HTS"/>
    <property type="match status" value="1"/>
</dbReference>
<dbReference type="FunFam" id="3.40.50.880:FF:000004">
    <property type="entry name" value="Homoserine O-succinyltransferase"/>
    <property type="match status" value="1"/>
</dbReference>
<dbReference type="Gene3D" id="3.40.50.880">
    <property type="match status" value="1"/>
</dbReference>
<dbReference type="HAMAP" id="MF_00295">
    <property type="entry name" value="MetA_acyltransf"/>
    <property type="match status" value="1"/>
</dbReference>
<dbReference type="InterPro" id="IPR029062">
    <property type="entry name" value="Class_I_gatase-like"/>
</dbReference>
<dbReference type="InterPro" id="IPR005697">
    <property type="entry name" value="HST_MetA"/>
</dbReference>
<dbReference type="InterPro" id="IPR033752">
    <property type="entry name" value="MetA_family"/>
</dbReference>
<dbReference type="NCBIfam" id="TIGR01001">
    <property type="entry name" value="metA"/>
    <property type="match status" value="1"/>
</dbReference>
<dbReference type="PANTHER" id="PTHR20919">
    <property type="entry name" value="HOMOSERINE O-SUCCINYLTRANSFERASE"/>
    <property type="match status" value="1"/>
</dbReference>
<dbReference type="PANTHER" id="PTHR20919:SF0">
    <property type="entry name" value="HOMOSERINE O-SUCCINYLTRANSFERASE"/>
    <property type="match status" value="1"/>
</dbReference>
<dbReference type="Pfam" id="PF04204">
    <property type="entry name" value="HTS"/>
    <property type="match status" value="1"/>
</dbReference>
<dbReference type="PIRSF" id="PIRSF000450">
    <property type="entry name" value="H_ser_succinyltr"/>
    <property type="match status" value="1"/>
</dbReference>
<dbReference type="SUPFAM" id="SSF52317">
    <property type="entry name" value="Class I glutamine amidotransferase-like"/>
    <property type="match status" value="1"/>
</dbReference>
<comment type="function">
    <text evidence="1">Transfers a succinyl group from succinyl-CoA to L-homoserine, forming succinyl-L-homoserine.</text>
</comment>
<comment type="catalytic activity">
    <reaction evidence="1">
        <text>L-homoserine + succinyl-CoA = O-succinyl-L-homoserine + CoA</text>
        <dbReference type="Rhea" id="RHEA:22008"/>
        <dbReference type="ChEBI" id="CHEBI:57287"/>
        <dbReference type="ChEBI" id="CHEBI:57292"/>
        <dbReference type="ChEBI" id="CHEBI:57476"/>
        <dbReference type="ChEBI" id="CHEBI:57661"/>
        <dbReference type="EC" id="2.3.1.46"/>
    </reaction>
</comment>
<comment type="pathway">
    <text evidence="1">Amino-acid biosynthesis; L-methionine biosynthesis via de novo pathway; O-succinyl-L-homoserine from L-homoserine: step 1/1.</text>
</comment>
<comment type="subcellular location">
    <subcellularLocation>
        <location evidence="1">Cytoplasm</location>
    </subcellularLocation>
</comment>
<comment type="similarity">
    <text evidence="1">Belongs to the MetA family.</text>
</comment>
<organism>
    <name type="scientific">Shewanella woodyi (strain ATCC 51908 / MS32)</name>
    <dbReference type="NCBI Taxonomy" id="392500"/>
    <lineage>
        <taxon>Bacteria</taxon>
        <taxon>Pseudomonadati</taxon>
        <taxon>Pseudomonadota</taxon>
        <taxon>Gammaproteobacteria</taxon>
        <taxon>Alteromonadales</taxon>
        <taxon>Shewanellaceae</taxon>
        <taxon>Shewanella</taxon>
    </lineage>
</organism>
<evidence type="ECO:0000255" key="1">
    <source>
        <dbReference type="HAMAP-Rule" id="MF_00295"/>
    </source>
</evidence>
<gene>
    <name evidence="1" type="primary">metAS</name>
    <name type="ordered locus">Swoo_3204</name>
</gene>
<feature type="chain" id="PRO_1000115195" description="Homoserine O-succinyltransferase">
    <location>
        <begin position="1"/>
        <end position="314"/>
    </location>
</feature>
<feature type="active site" description="Acyl-thioester intermediate" evidence="1">
    <location>
        <position position="142"/>
    </location>
</feature>
<feature type="active site" description="Proton acceptor" evidence="1">
    <location>
        <position position="235"/>
    </location>
</feature>
<feature type="active site" evidence="1">
    <location>
        <position position="237"/>
    </location>
</feature>
<feature type="binding site" evidence="1">
    <location>
        <position position="163"/>
    </location>
    <ligand>
        <name>substrate</name>
    </ligand>
</feature>
<feature type="binding site" evidence="1">
    <location>
        <position position="192"/>
    </location>
    <ligand>
        <name>substrate</name>
    </ligand>
</feature>
<feature type="binding site" evidence="1">
    <location>
        <position position="249"/>
    </location>
    <ligand>
        <name>substrate</name>
    </ligand>
</feature>
<feature type="site" description="Important for acyl-CoA specificity" evidence="1">
    <location>
        <position position="111"/>
    </location>
</feature>
<feature type="site" description="Important for substrate specificity" evidence="1">
    <location>
        <position position="192"/>
    </location>
</feature>
<accession>B1KMU6</accession>
<keyword id="KW-0012">Acyltransferase</keyword>
<keyword id="KW-0028">Amino-acid biosynthesis</keyword>
<keyword id="KW-0963">Cytoplasm</keyword>
<keyword id="KW-0486">Methionine biosynthesis</keyword>
<keyword id="KW-1185">Reference proteome</keyword>
<keyword id="KW-0808">Transferase</keyword>
<sequence length="314" mass="36665">MPVKIPDDLPAAEILESENIFVMSETRAANQDIRPMKVLILNLMPNKIETETQLLRLLGNTPLQVDVDLLRIHDKESKHTSIDHMNNFYRDFEAVRQKNYDGLIITGAPLGQIEFEEVSYWDHIREIIDWSQQHVTSVLFLCWAAHAALFHLYGLNRNLLEQKRSGVFVHRRTTQHFPLLRGFDDEFLAPHSRFAEMSLEQLKAHPELQVLTESDTAGAYMVLSRNNRNLFVMGHPEYQKSTLKDEYHRDLEQGLNPDVPQNYFRDDNPEKEPVARWHGHGSLLVSNWLNYYVYQLTPYNLDDMSGITPWENKQ</sequence>
<proteinExistence type="inferred from homology"/>
<protein>
    <recommendedName>
        <fullName evidence="1">Homoserine O-succinyltransferase</fullName>
        <shortName evidence="1">HST</shortName>
        <ecNumber evidence="1">2.3.1.46</ecNumber>
    </recommendedName>
    <alternativeName>
        <fullName evidence="1">Homoserine transsuccinylase</fullName>
        <shortName evidence="1">HTS</shortName>
    </alternativeName>
</protein>
<name>METAS_SHEWM</name>
<reference key="1">
    <citation type="submission" date="2008-02" db="EMBL/GenBank/DDBJ databases">
        <title>Complete sequence of Shewanella woodyi ATCC 51908.</title>
        <authorList>
            <consortium name="US DOE Joint Genome Institute"/>
            <person name="Copeland A."/>
            <person name="Lucas S."/>
            <person name="Lapidus A."/>
            <person name="Glavina del Rio T."/>
            <person name="Dalin E."/>
            <person name="Tice H."/>
            <person name="Bruce D."/>
            <person name="Goodwin L."/>
            <person name="Pitluck S."/>
            <person name="Sims D."/>
            <person name="Brettin T."/>
            <person name="Detter J.C."/>
            <person name="Han C."/>
            <person name="Kuske C.R."/>
            <person name="Schmutz J."/>
            <person name="Larimer F."/>
            <person name="Land M."/>
            <person name="Hauser L."/>
            <person name="Kyrpides N."/>
            <person name="Lykidis A."/>
            <person name="Zhao J.-S."/>
            <person name="Richardson P."/>
        </authorList>
    </citation>
    <scope>NUCLEOTIDE SEQUENCE [LARGE SCALE GENOMIC DNA]</scope>
    <source>
        <strain>ATCC 51908 / MS32</strain>
    </source>
</reference>